<name>METAS_SALPK</name>
<feature type="chain" id="PRO_1000115193" description="Homoserine O-succinyltransferase">
    <location>
        <begin position="1"/>
        <end position="309"/>
    </location>
</feature>
<feature type="active site" description="Acyl-thioester intermediate" evidence="1">
    <location>
        <position position="142"/>
    </location>
</feature>
<feature type="active site" description="Proton acceptor" evidence="1">
    <location>
        <position position="235"/>
    </location>
</feature>
<feature type="active site" evidence="1">
    <location>
        <position position="237"/>
    </location>
</feature>
<feature type="binding site" evidence="1">
    <location>
        <position position="163"/>
    </location>
    <ligand>
        <name>substrate</name>
    </ligand>
</feature>
<feature type="binding site" evidence="1">
    <location>
        <position position="192"/>
    </location>
    <ligand>
        <name>substrate</name>
    </ligand>
</feature>
<feature type="binding site" evidence="1">
    <location>
        <position position="249"/>
    </location>
    <ligand>
        <name>substrate</name>
    </ligand>
</feature>
<feature type="site" description="Important for acyl-CoA specificity" evidence="1">
    <location>
        <position position="111"/>
    </location>
</feature>
<feature type="site" description="Important for substrate specificity" evidence="1">
    <location>
        <position position="192"/>
    </location>
</feature>
<dbReference type="EC" id="2.3.1.46" evidence="1"/>
<dbReference type="EMBL" id="FM200053">
    <property type="protein sequence ID" value="CAR62013.1"/>
    <property type="molecule type" value="Genomic_DNA"/>
</dbReference>
<dbReference type="SMR" id="B5BJS7"/>
<dbReference type="KEGG" id="sek:SSPA3730"/>
<dbReference type="HOGENOM" id="CLU_057851_0_1_6"/>
<dbReference type="UniPathway" id="UPA00051">
    <property type="reaction ID" value="UER00075"/>
</dbReference>
<dbReference type="Proteomes" id="UP000001869">
    <property type="component" value="Chromosome"/>
</dbReference>
<dbReference type="GO" id="GO:0005737">
    <property type="term" value="C:cytoplasm"/>
    <property type="evidence" value="ECO:0007669"/>
    <property type="project" value="UniProtKB-SubCell"/>
</dbReference>
<dbReference type="GO" id="GO:0004414">
    <property type="term" value="F:homoserine O-acetyltransferase activity"/>
    <property type="evidence" value="ECO:0007669"/>
    <property type="project" value="UniProtKB-UniRule"/>
</dbReference>
<dbReference type="GO" id="GO:0008899">
    <property type="term" value="F:homoserine O-succinyltransferase activity"/>
    <property type="evidence" value="ECO:0007669"/>
    <property type="project" value="UniProtKB-EC"/>
</dbReference>
<dbReference type="GO" id="GO:0019281">
    <property type="term" value="P:L-methionine biosynthetic process from homoserine via O-succinyl-L-homoserine and cystathionine"/>
    <property type="evidence" value="ECO:0007669"/>
    <property type="project" value="InterPro"/>
</dbReference>
<dbReference type="CDD" id="cd03131">
    <property type="entry name" value="GATase1_HTS"/>
    <property type="match status" value="1"/>
</dbReference>
<dbReference type="FunFam" id="3.40.50.880:FF:000004">
    <property type="entry name" value="Homoserine O-succinyltransferase"/>
    <property type="match status" value="1"/>
</dbReference>
<dbReference type="Gene3D" id="3.40.50.880">
    <property type="match status" value="1"/>
</dbReference>
<dbReference type="HAMAP" id="MF_00295">
    <property type="entry name" value="MetA_acyltransf"/>
    <property type="match status" value="1"/>
</dbReference>
<dbReference type="InterPro" id="IPR029062">
    <property type="entry name" value="Class_I_gatase-like"/>
</dbReference>
<dbReference type="InterPro" id="IPR005697">
    <property type="entry name" value="HST_MetA"/>
</dbReference>
<dbReference type="InterPro" id="IPR033752">
    <property type="entry name" value="MetA_family"/>
</dbReference>
<dbReference type="NCBIfam" id="TIGR01001">
    <property type="entry name" value="metA"/>
    <property type="match status" value="1"/>
</dbReference>
<dbReference type="PANTHER" id="PTHR20919">
    <property type="entry name" value="HOMOSERINE O-SUCCINYLTRANSFERASE"/>
    <property type="match status" value="1"/>
</dbReference>
<dbReference type="PANTHER" id="PTHR20919:SF0">
    <property type="entry name" value="HOMOSERINE O-SUCCINYLTRANSFERASE"/>
    <property type="match status" value="1"/>
</dbReference>
<dbReference type="Pfam" id="PF04204">
    <property type="entry name" value="HTS"/>
    <property type="match status" value="1"/>
</dbReference>
<dbReference type="PIRSF" id="PIRSF000450">
    <property type="entry name" value="H_ser_succinyltr"/>
    <property type="match status" value="1"/>
</dbReference>
<dbReference type="SUPFAM" id="SSF52317">
    <property type="entry name" value="Class I glutamine amidotransferase-like"/>
    <property type="match status" value="1"/>
</dbReference>
<proteinExistence type="inferred from homology"/>
<evidence type="ECO:0000255" key="1">
    <source>
        <dbReference type="HAMAP-Rule" id="MF_00295"/>
    </source>
</evidence>
<accession>B5BJS7</accession>
<keyword id="KW-0012">Acyltransferase</keyword>
<keyword id="KW-0028">Amino-acid biosynthesis</keyword>
<keyword id="KW-0963">Cytoplasm</keyword>
<keyword id="KW-0486">Methionine biosynthesis</keyword>
<keyword id="KW-0808">Transferase</keyword>
<comment type="function">
    <text evidence="1">Transfers a succinyl group from succinyl-CoA to L-homoserine, forming succinyl-L-homoserine.</text>
</comment>
<comment type="catalytic activity">
    <reaction evidence="1">
        <text>L-homoserine + succinyl-CoA = O-succinyl-L-homoserine + CoA</text>
        <dbReference type="Rhea" id="RHEA:22008"/>
        <dbReference type="ChEBI" id="CHEBI:57287"/>
        <dbReference type="ChEBI" id="CHEBI:57292"/>
        <dbReference type="ChEBI" id="CHEBI:57476"/>
        <dbReference type="ChEBI" id="CHEBI:57661"/>
        <dbReference type="EC" id="2.3.1.46"/>
    </reaction>
</comment>
<comment type="pathway">
    <text evidence="1">Amino-acid biosynthesis; L-methionine biosynthesis via de novo pathway; O-succinyl-L-homoserine from L-homoserine: step 1/1.</text>
</comment>
<comment type="subunit">
    <text evidence="1">Homodimer.</text>
</comment>
<comment type="subcellular location">
    <subcellularLocation>
        <location evidence="1">Cytoplasm</location>
    </subcellularLocation>
</comment>
<comment type="similarity">
    <text evidence="1">Belongs to the MetA family.</text>
</comment>
<organism>
    <name type="scientific">Salmonella paratyphi A (strain AKU_12601)</name>
    <dbReference type="NCBI Taxonomy" id="554290"/>
    <lineage>
        <taxon>Bacteria</taxon>
        <taxon>Pseudomonadati</taxon>
        <taxon>Pseudomonadota</taxon>
        <taxon>Gammaproteobacteria</taxon>
        <taxon>Enterobacterales</taxon>
        <taxon>Enterobacteriaceae</taxon>
        <taxon>Salmonella</taxon>
    </lineage>
</organism>
<reference key="1">
    <citation type="journal article" date="2009" name="BMC Genomics">
        <title>Pseudogene accumulation in the evolutionary histories of Salmonella enterica serovars Paratyphi A and Typhi.</title>
        <authorList>
            <person name="Holt K.E."/>
            <person name="Thomson N.R."/>
            <person name="Wain J."/>
            <person name="Langridge G.C."/>
            <person name="Hasan R."/>
            <person name="Bhutta Z.A."/>
            <person name="Quail M.A."/>
            <person name="Norbertczak H."/>
            <person name="Walker D."/>
            <person name="Simmonds M."/>
            <person name="White B."/>
            <person name="Bason N."/>
            <person name="Mungall K."/>
            <person name="Dougan G."/>
            <person name="Parkhill J."/>
        </authorList>
    </citation>
    <scope>NUCLEOTIDE SEQUENCE [LARGE SCALE GENOMIC DNA]</scope>
    <source>
        <strain>AKU_12601</strain>
    </source>
</reference>
<sequence>MPIRVLDELPAVNFLREENVFVMTTSRASGQEIRPLKVLILNLMPKKIETENQFLRLLSNSPLQVDIQLLRIDARESRNTPAEHLNNFYCNFDDICDQNFDGLIVTGAPLGLVEFNDVAYWPQIRQVLEWAKDHVTSTLFVCWAVQAALNILYGIPKQTRTDKLSGVYEHHILHPHALLTRGFDDSFLAPHSRYADFPAALIRDYTDLEILAETEEGDAYLFASKDKRIAFVTGHPEYDAHTLAGEYFRDVEAGLNPEVPYNYFPKNDPQNIPRATWRSHGNLLFTNWLNYYVYQITPYDLRHMNPTLD</sequence>
<protein>
    <recommendedName>
        <fullName evidence="1">Homoserine O-succinyltransferase</fullName>
        <shortName evidence="1">HST</shortName>
        <ecNumber evidence="1">2.3.1.46</ecNumber>
    </recommendedName>
    <alternativeName>
        <fullName evidence="1">Homoserine transsuccinylase</fullName>
        <shortName evidence="1">HTS</shortName>
    </alternativeName>
</protein>
<gene>
    <name evidence="1" type="primary">metAS</name>
    <name type="ordered locus">SSPA3730</name>
</gene>